<keyword id="KW-1003">Cell membrane</keyword>
<keyword id="KW-1015">Disulfide bond</keyword>
<keyword id="KW-0297">G-protein coupled receptor</keyword>
<keyword id="KW-0325">Glycoprotein</keyword>
<keyword id="KW-0472">Membrane</keyword>
<keyword id="KW-0552">Olfaction</keyword>
<keyword id="KW-0675">Receptor</keyword>
<keyword id="KW-1185">Reference proteome</keyword>
<keyword id="KW-0716">Sensory transduction</keyword>
<keyword id="KW-0807">Transducer</keyword>
<keyword id="KW-0812">Transmembrane</keyword>
<keyword id="KW-1133">Transmembrane helix</keyword>
<evidence type="ECO:0000255" key="1"/>
<evidence type="ECO:0000255" key="2">
    <source>
        <dbReference type="PROSITE-ProRule" id="PRU00521"/>
    </source>
</evidence>
<evidence type="ECO:0000305" key="3"/>
<evidence type="ECO:0000312" key="4">
    <source>
        <dbReference type="MGI" id="MGI:3030017"/>
    </source>
</evidence>
<dbReference type="EMBL" id="AY073612">
    <property type="protein sequence ID" value="AAL61275.1"/>
    <property type="molecule type" value="Genomic_DNA"/>
</dbReference>
<dbReference type="EMBL" id="AY317268">
    <property type="protein sequence ID" value="AAP70775.1"/>
    <property type="molecule type" value="Genomic_DNA"/>
</dbReference>
<dbReference type="CCDS" id="CCDS28241.1"/>
<dbReference type="SMR" id="Q8VFB9"/>
<dbReference type="FunCoup" id="Q8VFB9">
    <property type="interactions" value="327"/>
</dbReference>
<dbReference type="STRING" id="10090.ENSMUSP00000149279"/>
<dbReference type="GlyCosmos" id="Q8VFB9">
    <property type="glycosylation" value="1 site, No reported glycans"/>
</dbReference>
<dbReference type="GlyGen" id="Q8VFB9">
    <property type="glycosylation" value="1 site"/>
</dbReference>
<dbReference type="PaxDb" id="10090-ENSMUSP00000080602"/>
<dbReference type="AGR" id="MGI:3030017"/>
<dbReference type="MGI" id="MGI:3030017">
    <property type="gene designation" value="Or5h17"/>
</dbReference>
<dbReference type="eggNOG" id="ENOG502T9JQ">
    <property type="taxonomic scope" value="Eukaryota"/>
</dbReference>
<dbReference type="InParanoid" id="Q8VFB9"/>
<dbReference type="OrthoDB" id="9615015at2759"/>
<dbReference type="PhylomeDB" id="Q8VFB9"/>
<dbReference type="PRO" id="PR:Q8VFB9"/>
<dbReference type="Proteomes" id="UP000000589">
    <property type="component" value="Unplaced"/>
</dbReference>
<dbReference type="RNAct" id="Q8VFB9">
    <property type="molecule type" value="protein"/>
</dbReference>
<dbReference type="GO" id="GO:0016020">
    <property type="term" value="C:membrane"/>
    <property type="evidence" value="ECO:0000247"/>
    <property type="project" value="MGI"/>
</dbReference>
<dbReference type="GO" id="GO:0005886">
    <property type="term" value="C:plasma membrane"/>
    <property type="evidence" value="ECO:0007669"/>
    <property type="project" value="UniProtKB-SubCell"/>
</dbReference>
<dbReference type="GO" id="GO:0004930">
    <property type="term" value="F:G protein-coupled receptor activity"/>
    <property type="evidence" value="ECO:0007669"/>
    <property type="project" value="UniProtKB-KW"/>
</dbReference>
<dbReference type="GO" id="GO:0004984">
    <property type="term" value="F:olfactory receptor activity"/>
    <property type="evidence" value="ECO:0000247"/>
    <property type="project" value="MGI"/>
</dbReference>
<dbReference type="GO" id="GO:0007186">
    <property type="term" value="P:G protein-coupled receptor signaling pathway"/>
    <property type="evidence" value="ECO:0000247"/>
    <property type="project" value="MGI"/>
</dbReference>
<dbReference type="GO" id="GO:0007608">
    <property type="term" value="P:sensory perception of smell"/>
    <property type="evidence" value="ECO:0000247"/>
    <property type="project" value="MGI"/>
</dbReference>
<dbReference type="FunFam" id="1.20.1070.10:FF:000004">
    <property type="entry name" value="Olfactory receptor"/>
    <property type="match status" value="1"/>
</dbReference>
<dbReference type="Gene3D" id="1.20.1070.10">
    <property type="entry name" value="Rhodopsin 7-helix transmembrane proteins"/>
    <property type="match status" value="1"/>
</dbReference>
<dbReference type="InterPro" id="IPR000276">
    <property type="entry name" value="GPCR_Rhodpsn"/>
</dbReference>
<dbReference type="InterPro" id="IPR017452">
    <property type="entry name" value="GPCR_Rhodpsn_7TM"/>
</dbReference>
<dbReference type="InterPro" id="IPR000725">
    <property type="entry name" value="Olfact_rcpt"/>
</dbReference>
<dbReference type="InterPro" id="IPR050516">
    <property type="entry name" value="Olfactory_GPCR"/>
</dbReference>
<dbReference type="PANTHER" id="PTHR26452">
    <property type="entry name" value="OLFACTORY RECEPTOR"/>
    <property type="match status" value="1"/>
</dbReference>
<dbReference type="Pfam" id="PF13853">
    <property type="entry name" value="7tm_4"/>
    <property type="match status" value="1"/>
</dbReference>
<dbReference type="PRINTS" id="PR00237">
    <property type="entry name" value="GPCRRHODOPSN"/>
</dbReference>
<dbReference type="PRINTS" id="PR00245">
    <property type="entry name" value="OLFACTORYR"/>
</dbReference>
<dbReference type="SUPFAM" id="SSF81321">
    <property type="entry name" value="Family A G protein-coupled receptor-like"/>
    <property type="match status" value="1"/>
</dbReference>
<dbReference type="PROSITE" id="PS00237">
    <property type="entry name" value="G_PROTEIN_RECEP_F1_1"/>
    <property type="match status" value="1"/>
</dbReference>
<dbReference type="PROSITE" id="PS50262">
    <property type="entry name" value="G_PROTEIN_RECEP_F1_2"/>
    <property type="match status" value="1"/>
</dbReference>
<proteinExistence type="inferred from homology"/>
<sequence>MEKKNETLWTEFVLTGLTCLPQWKPLLFLVFLVIYFMTIVGNLGLITLIWNDPHLHIPMYLFLSNLAFVDTWLSSTVTPRMLFNLLDKGKVISVAECKTQFFSFAISVTTECFLLAAMAYDRYAAICNPLLYPVIMTNRLCVRLLALSFIGGFLHAVIHESFLSRLTFCNSNIIYHFYCDVIPLLKISCTDPSLNYLIIFIFSGSIQVFTIMTVLISYTFVLFTILKKKSDKGIRKAFSTCGAHLLSVSLYYGPLLFMYVHPASSEVDDQDMILSLFYTVIIPVLNPIIYSLRNKQVIDSLKKMLKMMV</sequence>
<reference key="1">
    <citation type="journal article" date="2002" name="Nat. Neurosci.">
        <title>The olfactory receptor gene superfamily of the mouse.</title>
        <authorList>
            <person name="Zhang X."/>
            <person name="Firestein S."/>
        </authorList>
    </citation>
    <scope>NUCLEOTIDE SEQUENCE [GENOMIC DNA]</scope>
</reference>
<reference key="2">
    <citation type="journal article" date="2002" name="Hum. Mol. Genet.">
        <title>Different evolutionary processes shaped the mouse and human olfactory receptor gene families.</title>
        <authorList>
            <person name="Young J.M."/>
            <person name="Friedman C."/>
            <person name="Williams E.M."/>
            <person name="Ross J.A."/>
            <person name="Tonnes-Priddy L."/>
            <person name="Trask B.J."/>
        </authorList>
    </citation>
    <scope>NUCLEOTIDE SEQUENCE [GENOMIC DNA]</scope>
</reference>
<reference key="3">
    <citation type="journal article" date="2002" name="Hum. Mol. Genet.">
        <authorList>
            <person name="Young J.M."/>
            <person name="Friedman C."/>
            <person name="Williams E.M."/>
            <person name="Ross J.A."/>
            <person name="Tonnes-Priddy L."/>
            <person name="Trask B.J."/>
        </authorList>
    </citation>
    <scope>ERRATUM OF PUBMED:11875048</scope>
</reference>
<organism>
    <name type="scientific">Mus musculus</name>
    <name type="common">Mouse</name>
    <dbReference type="NCBI Taxonomy" id="10090"/>
    <lineage>
        <taxon>Eukaryota</taxon>
        <taxon>Metazoa</taxon>
        <taxon>Chordata</taxon>
        <taxon>Craniata</taxon>
        <taxon>Vertebrata</taxon>
        <taxon>Euteleostomi</taxon>
        <taxon>Mammalia</taxon>
        <taxon>Eutheria</taxon>
        <taxon>Euarchontoglires</taxon>
        <taxon>Glires</taxon>
        <taxon>Rodentia</taxon>
        <taxon>Myomorpha</taxon>
        <taxon>Muroidea</taxon>
        <taxon>Muridae</taxon>
        <taxon>Murinae</taxon>
        <taxon>Mus</taxon>
        <taxon>Mus</taxon>
    </lineage>
</organism>
<gene>
    <name evidence="4" type="primary">Or5h17</name>
    <name evidence="4" type="synonym">Mor183-2</name>
    <name evidence="4" type="synonym">Olfr183</name>
</gene>
<name>OL183_MOUSE</name>
<comment type="function">
    <text>Potential odorant receptor.</text>
</comment>
<comment type="subcellular location">
    <subcellularLocation>
        <location evidence="3">Cell membrane</location>
        <topology evidence="1">Multi-pass membrane protein</topology>
    </subcellularLocation>
</comment>
<comment type="similarity">
    <text evidence="2">Belongs to the G-protein coupled receptor 1 family.</text>
</comment>
<feature type="chain" id="PRO_0000269657" description="Olfactory receptor 5H17">
    <location>
        <begin position="1"/>
        <end position="309"/>
    </location>
</feature>
<feature type="topological domain" description="Extracellular" evidence="1">
    <location>
        <begin position="1"/>
        <end position="28"/>
    </location>
</feature>
<feature type="transmembrane region" description="Helical; Name=1" evidence="1">
    <location>
        <begin position="29"/>
        <end position="49"/>
    </location>
</feature>
<feature type="topological domain" description="Cytoplasmic" evidence="1">
    <location>
        <begin position="50"/>
        <end position="56"/>
    </location>
</feature>
<feature type="transmembrane region" description="Helical; Name=2" evidence="1">
    <location>
        <begin position="57"/>
        <end position="77"/>
    </location>
</feature>
<feature type="topological domain" description="Extracellular" evidence="1">
    <location>
        <begin position="78"/>
        <end position="93"/>
    </location>
</feature>
<feature type="transmembrane region" description="Helical; Name=3" evidence="1">
    <location>
        <begin position="94"/>
        <end position="114"/>
    </location>
</feature>
<feature type="topological domain" description="Cytoplasmic" evidence="1">
    <location>
        <begin position="115"/>
        <end position="144"/>
    </location>
</feature>
<feature type="transmembrane region" description="Helical; Name=4" evidence="1">
    <location>
        <begin position="145"/>
        <end position="165"/>
    </location>
</feature>
<feature type="topological domain" description="Extracellular" evidence="1">
    <location>
        <begin position="166"/>
        <end position="198"/>
    </location>
</feature>
<feature type="transmembrane region" description="Helical; Name=5" evidence="1">
    <location>
        <begin position="199"/>
        <end position="219"/>
    </location>
</feature>
<feature type="topological domain" description="Cytoplasmic" evidence="1">
    <location>
        <begin position="220"/>
        <end position="239"/>
    </location>
</feature>
<feature type="transmembrane region" description="Helical; Name=6" evidence="1">
    <location>
        <begin position="240"/>
        <end position="260"/>
    </location>
</feature>
<feature type="topological domain" description="Extracellular" evidence="1">
    <location>
        <begin position="261"/>
        <end position="271"/>
    </location>
</feature>
<feature type="transmembrane region" description="Helical; Name=7" evidence="1">
    <location>
        <begin position="272"/>
        <end position="292"/>
    </location>
</feature>
<feature type="topological domain" description="Cytoplasmic" evidence="1">
    <location>
        <begin position="293"/>
        <end position="309"/>
    </location>
</feature>
<feature type="glycosylation site" description="N-linked (GlcNAc...) asparagine" evidence="1">
    <location>
        <position position="5"/>
    </location>
</feature>
<feature type="disulfide bond" evidence="2">
    <location>
        <begin position="97"/>
        <end position="189"/>
    </location>
</feature>
<accession>Q8VFB9</accession>
<protein>
    <recommendedName>
        <fullName evidence="3">Olfactory receptor 5H17</fullName>
    </recommendedName>
    <alternativeName>
        <fullName evidence="3">Olfactory receptor 183</fullName>
    </alternativeName>
    <alternativeName>
        <fullName>Olfactory receptor 183-2</fullName>
    </alternativeName>
</protein>